<feature type="chain" id="PRO_0000306806" description="FERM and PDZ domain-containing protein 1">
    <location>
        <begin position="1"/>
        <end position="1549"/>
    </location>
</feature>
<feature type="domain" description="PDZ" evidence="3">
    <location>
        <begin position="57"/>
        <end position="135"/>
    </location>
</feature>
<feature type="domain" description="FERM" evidence="2">
    <location>
        <begin position="181"/>
        <end position="496"/>
    </location>
</feature>
<feature type="region of interest" description="Disordered" evidence="4">
    <location>
        <begin position="554"/>
        <end position="618"/>
    </location>
</feature>
<feature type="region of interest" description="Disordered" evidence="4">
    <location>
        <begin position="717"/>
        <end position="738"/>
    </location>
</feature>
<feature type="region of interest" description="Disordered" evidence="4">
    <location>
        <begin position="775"/>
        <end position="834"/>
    </location>
</feature>
<feature type="region of interest" description="Disordered" evidence="4">
    <location>
        <begin position="913"/>
        <end position="1046"/>
    </location>
</feature>
<feature type="region of interest" description="Important for interaction with GPSM2" evidence="1">
    <location>
        <begin position="924"/>
        <end position="931"/>
    </location>
</feature>
<feature type="region of interest" description="Disordered" evidence="4">
    <location>
        <begin position="1097"/>
        <end position="1174"/>
    </location>
</feature>
<feature type="region of interest" description="Disordered" evidence="4">
    <location>
        <begin position="1231"/>
        <end position="1257"/>
    </location>
</feature>
<feature type="region of interest" description="Disordered" evidence="4">
    <location>
        <begin position="1321"/>
        <end position="1347"/>
    </location>
</feature>
<feature type="compositionally biased region" description="Polar residues" evidence="4">
    <location>
        <begin position="717"/>
        <end position="730"/>
    </location>
</feature>
<feature type="compositionally biased region" description="Polar residues" evidence="4">
    <location>
        <begin position="950"/>
        <end position="961"/>
    </location>
</feature>
<feature type="compositionally biased region" description="Low complexity" evidence="4">
    <location>
        <begin position="962"/>
        <end position="980"/>
    </location>
</feature>
<feature type="compositionally biased region" description="Basic and acidic residues" evidence="4">
    <location>
        <begin position="1117"/>
        <end position="1130"/>
    </location>
</feature>
<feature type="sequence conflict" description="In Ref. 2; BAC65691." evidence="6" ref="2">
    <original>H</original>
    <variation>L</variation>
    <location>
        <position position="501"/>
    </location>
</feature>
<feature type="sequence conflict" description="In Ref. 2; BAC65691." evidence="6" ref="2">
    <original>S</original>
    <variation>G</variation>
    <location>
        <position position="812"/>
    </location>
</feature>
<feature type="sequence conflict" description="In Ref. 2; BAC65691." evidence="6" ref="2">
    <original>G</original>
    <variation>E</variation>
    <location>
        <position position="819"/>
    </location>
</feature>
<feature type="sequence conflict" description="In Ref. 2; BAC65691." evidence="6" ref="2">
    <original>V</original>
    <variation>L</variation>
    <location>
        <position position="991"/>
    </location>
</feature>
<feature type="sequence conflict" description="In Ref. 2; BAC65691." evidence="6" ref="2">
    <original>T</original>
    <variation>S</variation>
    <location>
        <position position="1000"/>
    </location>
</feature>
<feature type="sequence conflict" description="In Ref. 2; BAC65691." evidence="6" ref="2">
    <original>V</original>
    <variation>VQ</variation>
    <location>
        <position position="1092"/>
    </location>
</feature>
<feature type="sequence conflict" description="In Ref. 2; BAC65691." evidence="6" ref="2">
    <original>Q</original>
    <variation>R</variation>
    <location>
        <position position="1160"/>
    </location>
</feature>
<feature type="sequence conflict" description="In Ref. 2; BAC65691." evidence="6" ref="2">
    <original>S</original>
    <variation>P</variation>
    <location>
        <position position="1163"/>
    </location>
</feature>
<feature type="sequence conflict" description="In Ref. 2; BAC65691." evidence="6" ref="2">
    <original>V</original>
    <variation>A</variation>
    <location>
        <position position="1212"/>
    </location>
</feature>
<feature type="sequence conflict" description="In Ref. 2; BAC65691." evidence="6" ref="2">
    <original>A</original>
    <variation>V</variation>
    <location>
        <position position="1241"/>
    </location>
</feature>
<feature type="sequence conflict" description="In Ref. 2; BAC65691." evidence="6" ref="2">
    <location>
        <position position="1254"/>
    </location>
</feature>
<feature type="sequence conflict" description="In Ref. 2; BAC65691." evidence="6" ref="2">
    <original>Q</original>
    <variation>H</variation>
    <location>
        <position position="1309"/>
    </location>
</feature>
<feature type="sequence conflict" description="In Ref. 2; BAC65691." evidence="6" ref="2">
    <original>L</original>
    <variation>P</variation>
    <location>
        <position position="1319"/>
    </location>
</feature>
<feature type="sequence conflict" description="In Ref. 2; BAC65691." evidence="6" ref="2">
    <original>S</original>
    <variation>N</variation>
    <location>
        <position position="1431"/>
    </location>
</feature>
<dbReference type="EMBL" id="AL772285">
    <property type="status" value="NOT_ANNOTATED_CDS"/>
    <property type="molecule type" value="Genomic_DNA"/>
</dbReference>
<dbReference type="EMBL" id="AK122409">
    <property type="protein sequence ID" value="BAC65691.1"/>
    <property type="molecule type" value="mRNA"/>
</dbReference>
<dbReference type="EMBL" id="BC031840">
    <property type="protein sequence ID" value="AAH31840.1"/>
    <property type="molecule type" value="mRNA"/>
</dbReference>
<dbReference type="EMBL" id="BC046469">
    <property type="protein sequence ID" value="AAH46469.1"/>
    <property type="molecule type" value="mRNA"/>
</dbReference>
<dbReference type="EMBL" id="BC051097">
    <property type="protein sequence ID" value="AAH51097.1"/>
    <property type="molecule type" value="mRNA"/>
</dbReference>
<dbReference type="CCDS" id="CCDS38753.1"/>
<dbReference type="RefSeq" id="NP_001074641.1">
    <property type="nucleotide sequence ID" value="NM_001081172.3"/>
</dbReference>
<dbReference type="RefSeq" id="NP_001412055.1">
    <property type="nucleotide sequence ID" value="NM_001425126.1"/>
</dbReference>
<dbReference type="RefSeq" id="NP_001412056.1">
    <property type="nucleotide sequence ID" value="NM_001425127.1"/>
</dbReference>
<dbReference type="RefSeq" id="XP_006538238.1">
    <property type="nucleotide sequence ID" value="XM_006538175.4"/>
</dbReference>
<dbReference type="RefSeq" id="XP_006538239.1">
    <property type="nucleotide sequence ID" value="XM_006538176.5"/>
</dbReference>
<dbReference type="RefSeq" id="XP_006538240.1">
    <property type="nucleotide sequence ID" value="XM_006538177.3"/>
</dbReference>
<dbReference type="RefSeq" id="XP_006538241.1">
    <property type="nucleotide sequence ID" value="XM_006538178.4"/>
</dbReference>
<dbReference type="RefSeq" id="XP_011248387.1">
    <property type="nucleotide sequence ID" value="XM_011250085.4"/>
</dbReference>
<dbReference type="SMR" id="A2AKB4"/>
<dbReference type="BioGRID" id="577902">
    <property type="interactions" value="1"/>
</dbReference>
<dbReference type="FunCoup" id="A2AKB4">
    <property type="interactions" value="147"/>
</dbReference>
<dbReference type="IntAct" id="A2AKB4">
    <property type="interactions" value="1"/>
</dbReference>
<dbReference type="STRING" id="10090.ENSMUSP00000103434"/>
<dbReference type="GlyGen" id="A2AKB4">
    <property type="glycosylation" value="5 sites, 1 O-linked glycan (1 site)"/>
</dbReference>
<dbReference type="iPTMnet" id="A2AKB4"/>
<dbReference type="PhosphoSitePlus" id="A2AKB4"/>
<dbReference type="SwissPalm" id="A2AKB4"/>
<dbReference type="PaxDb" id="10090-ENSMUSP00000103434"/>
<dbReference type="PeptideAtlas" id="A2AKB4"/>
<dbReference type="ProteomicsDB" id="271606"/>
<dbReference type="Antibodypedia" id="26299">
    <property type="antibodies" value="105 antibodies from 24 providers"/>
</dbReference>
<dbReference type="Ensembl" id="ENSMUST00000044773.12">
    <property type="protein sequence ID" value="ENSMUSP00000047232.6"/>
    <property type="gene ID" value="ENSMUSG00000035615.13"/>
</dbReference>
<dbReference type="Ensembl" id="ENSMUST00000107804.2">
    <property type="protein sequence ID" value="ENSMUSP00000103434.2"/>
    <property type="gene ID" value="ENSMUSG00000035615.13"/>
</dbReference>
<dbReference type="GeneID" id="666060"/>
<dbReference type="KEGG" id="mmu:666060"/>
<dbReference type="UCSC" id="uc008ssi.1">
    <property type="organism name" value="mouse"/>
</dbReference>
<dbReference type="AGR" id="MGI:2446274"/>
<dbReference type="CTD" id="22844"/>
<dbReference type="MGI" id="MGI:2446274">
    <property type="gene designation" value="Frmpd1"/>
</dbReference>
<dbReference type="VEuPathDB" id="HostDB:ENSMUSG00000035615"/>
<dbReference type="eggNOG" id="KOG3552">
    <property type="taxonomic scope" value="Eukaryota"/>
</dbReference>
<dbReference type="GeneTree" id="ENSGT00950000183035"/>
<dbReference type="HOGENOM" id="CLU_003698_0_0_1"/>
<dbReference type="InParanoid" id="A2AKB4"/>
<dbReference type="OMA" id="ESMDDVC"/>
<dbReference type="OrthoDB" id="5859304at2759"/>
<dbReference type="PhylomeDB" id="A2AKB4"/>
<dbReference type="TreeFam" id="TF316497"/>
<dbReference type="BioGRID-ORCS" id="666060">
    <property type="hits" value="1 hit in 77 CRISPR screens"/>
</dbReference>
<dbReference type="ChiTaRS" id="Frmpd1">
    <property type="organism name" value="mouse"/>
</dbReference>
<dbReference type="PRO" id="PR:A2AKB4"/>
<dbReference type="Proteomes" id="UP000000589">
    <property type="component" value="Chromosome 4"/>
</dbReference>
<dbReference type="RNAct" id="A2AKB4">
    <property type="molecule type" value="protein"/>
</dbReference>
<dbReference type="Bgee" id="ENSMUSG00000035615">
    <property type="expression patterns" value="Expressed in lumbar dorsal root ganglion and 86 other cell types or tissues"/>
</dbReference>
<dbReference type="ExpressionAtlas" id="A2AKB4">
    <property type="expression patterns" value="baseline and differential"/>
</dbReference>
<dbReference type="GO" id="GO:0005938">
    <property type="term" value="C:cell cortex"/>
    <property type="evidence" value="ECO:0007669"/>
    <property type="project" value="Ensembl"/>
</dbReference>
<dbReference type="GO" id="GO:0005856">
    <property type="term" value="C:cytoskeleton"/>
    <property type="evidence" value="ECO:0007669"/>
    <property type="project" value="InterPro"/>
</dbReference>
<dbReference type="GO" id="GO:0005829">
    <property type="term" value="C:cytosol"/>
    <property type="evidence" value="ECO:0007669"/>
    <property type="project" value="UniProtKB-SubCell"/>
</dbReference>
<dbReference type="GO" id="GO:0098978">
    <property type="term" value="C:glutamatergic synapse"/>
    <property type="evidence" value="ECO:0007669"/>
    <property type="project" value="UniProtKB-ARBA"/>
</dbReference>
<dbReference type="GO" id="GO:0005886">
    <property type="term" value="C:plasma membrane"/>
    <property type="evidence" value="ECO:0007669"/>
    <property type="project" value="UniProtKB-SubCell"/>
</dbReference>
<dbReference type="GO" id="GO:0032991">
    <property type="term" value="C:protein-containing complex"/>
    <property type="evidence" value="ECO:0007669"/>
    <property type="project" value="Ensembl"/>
</dbReference>
<dbReference type="GO" id="GO:0090150">
    <property type="term" value="P:establishment of protein localization to membrane"/>
    <property type="evidence" value="ECO:0007669"/>
    <property type="project" value="Ensembl"/>
</dbReference>
<dbReference type="GO" id="GO:0036367">
    <property type="term" value="P:light adaption"/>
    <property type="evidence" value="ECO:0000315"/>
    <property type="project" value="MGI"/>
</dbReference>
<dbReference type="GO" id="GO:0015031">
    <property type="term" value="P:protein transport"/>
    <property type="evidence" value="ECO:0000315"/>
    <property type="project" value="MGI"/>
</dbReference>
<dbReference type="GO" id="GO:0008277">
    <property type="term" value="P:regulation of G protein-coupled receptor signaling pathway"/>
    <property type="evidence" value="ECO:0007669"/>
    <property type="project" value="Ensembl"/>
</dbReference>
<dbReference type="GO" id="GO:0009642">
    <property type="term" value="P:response to light intensity"/>
    <property type="evidence" value="ECO:0000315"/>
    <property type="project" value="MGI"/>
</dbReference>
<dbReference type="GO" id="GO:0007165">
    <property type="term" value="P:signal transduction"/>
    <property type="evidence" value="ECO:0007669"/>
    <property type="project" value="InterPro"/>
</dbReference>
<dbReference type="CDD" id="cd14473">
    <property type="entry name" value="FERM_B-lobe"/>
    <property type="match status" value="1"/>
</dbReference>
<dbReference type="CDD" id="cd13183">
    <property type="entry name" value="FERM_C_FRMPD1_FRMPD3_FRMPD4"/>
    <property type="match status" value="1"/>
</dbReference>
<dbReference type="CDD" id="cd21942">
    <property type="entry name" value="LGNbd_FRMPD1"/>
    <property type="match status" value="1"/>
</dbReference>
<dbReference type="FunFam" id="3.10.20.90:FF:000203">
    <property type="entry name" value="FERM and PDZ domain containing 1"/>
    <property type="match status" value="1"/>
</dbReference>
<dbReference type="FunFam" id="1.20.80.10:FF:000009">
    <property type="entry name" value="FERM and PDZ domain containing 4"/>
    <property type="match status" value="1"/>
</dbReference>
<dbReference type="FunFam" id="2.30.42.10:FF:000168">
    <property type="entry name" value="FERM and PDZ domain-containing protein 1"/>
    <property type="match status" value="1"/>
</dbReference>
<dbReference type="FunFam" id="2.30.29.30:FF:000066">
    <property type="entry name" value="FERM and PDZ domain-containing protein 4"/>
    <property type="match status" value="1"/>
</dbReference>
<dbReference type="Gene3D" id="1.20.80.10">
    <property type="match status" value="1"/>
</dbReference>
<dbReference type="Gene3D" id="2.30.42.10">
    <property type="match status" value="1"/>
</dbReference>
<dbReference type="Gene3D" id="3.10.20.90">
    <property type="entry name" value="Phosphatidylinositol 3-kinase Catalytic Subunit, Chain A, domain 1"/>
    <property type="match status" value="1"/>
</dbReference>
<dbReference type="Gene3D" id="2.30.29.30">
    <property type="entry name" value="Pleckstrin-homology domain (PH domain)/Phosphotyrosine-binding domain (PTB)"/>
    <property type="match status" value="1"/>
</dbReference>
<dbReference type="InterPro" id="IPR019749">
    <property type="entry name" value="Band_41_domain"/>
</dbReference>
<dbReference type="InterPro" id="IPR049385">
    <property type="entry name" value="FAK1-like_FERM_C"/>
</dbReference>
<dbReference type="InterPro" id="IPR014352">
    <property type="entry name" value="FERM/acyl-CoA-bd_prot_sf"/>
</dbReference>
<dbReference type="InterPro" id="IPR035963">
    <property type="entry name" value="FERM_2"/>
</dbReference>
<dbReference type="InterPro" id="IPR019748">
    <property type="entry name" value="FERM_central"/>
</dbReference>
<dbReference type="InterPro" id="IPR000299">
    <property type="entry name" value="FERM_domain"/>
</dbReference>
<dbReference type="InterPro" id="IPR041779">
    <property type="entry name" value="FRMPD1/3/4_FERM_C"/>
</dbReference>
<dbReference type="InterPro" id="IPR001478">
    <property type="entry name" value="PDZ"/>
</dbReference>
<dbReference type="InterPro" id="IPR036034">
    <property type="entry name" value="PDZ_sf"/>
</dbReference>
<dbReference type="InterPro" id="IPR011993">
    <property type="entry name" value="PH-like_dom_sf"/>
</dbReference>
<dbReference type="InterPro" id="IPR000159">
    <property type="entry name" value="RA_dom"/>
</dbReference>
<dbReference type="InterPro" id="IPR029071">
    <property type="entry name" value="Ubiquitin-like_domsf"/>
</dbReference>
<dbReference type="PANTHER" id="PTHR46221:SF2">
    <property type="entry name" value="FERM AND PDZ DOMAIN-CONTAINING PROTEIN 1"/>
    <property type="match status" value="1"/>
</dbReference>
<dbReference type="PANTHER" id="PTHR46221">
    <property type="entry name" value="FERM AND PDZ DOMAIN-CONTAINING PROTEIN FAMILY MEMBER"/>
    <property type="match status" value="1"/>
</dbReference>
<dbReference type="Pfam" id="PF21477">
    <property type="entry name" value="FERM_C_FAK1"/>
    <property type="match status" value="1"/>
</dbReference>
<dbReference type="Pfam" id="PF00373">
    <property type="entry name" value="FERM_M"/>
    <property type="match status" value="1"/>
</dbReference>
<dbReference type="Pfam" id="PF00595">
    <property type="entry name" value="PDZ"/>
    <property type="match status" value="1"/>
</dbReference>
<dbReference type="Pfam" id="PF21989">
    <property type="entry name" value="RA_2"/>
    <property type="match status" value="1"/>
</dbReference>
<dbReference type="SMART" id="SM00295">
    <property type="entry name" value="B41"/>
    <property type="match status" value="1"/>
</dbReference>
<dbReference type="SMART" id="SM00228">
    <property type="entry name" value="PDZ"/>
    <property type="match status" value="1"/>
</dbReference>
<dbReference type="SUPFAM" id="SSF50156">
    <property type="entry name" value="PDZ domain-like"/>
    <property type="match status" value="1"/>
</dbReference>
<dbReference type="SUPFAM" id="SSF50729">
    <property type="entry name" value="PH domain-like"/>
    <property type="match status" value="1"/>
</dbReference>
<dbReference type="SUPFAM" id="SSF47031">
    <property type="entry name" value="Second domain of FERM"/>
    <property type="match status" value="1"/>
</dbReference>
<dbReference type="SUPFAM" id="SSF54236">
    <property type="entry name" value="Ubiquitin-like"/>
    <property type="match status" value="1"/>
</dbReference>
<dbReference type="PROSITE" id="PS50057">
    <property type="entry name" value="FERM_3"/>
    <property type="match status" value="1"/>
</dbReference>
<dbReference type="PROSITE" id="PS50106">
    <property type="entry name" value="PDZ"/>
    <property type="match status" value="1"/>
</dbReference>
<proteinExistence type="evidence at protein level"/>
<accession>A2AKB4</accession>
<accession>Q80TN2</accession>
<accession>Q80XK5</accession>
<accession>Q8K0C0</accession>
<keyword id="KW-1003">Cell membrane</keyword>
<keyword id="KW-0963">Cytoplasm</keyword>
<keyword id="KW-0472">Membrane</keyword>
<keyword id="KW-1185">Reference proteome</keyword>
<evidence type="ECO:0000250" key="1">
    <source>
        <dbReference type="UniProtKB" id="Q5SYB0"/>
    </source>
</evidence>
<evidence type="ECO:0000255" key="2">
    <source>
        <dbReference type="PROSITE-ProRule" id="PRU00084"/>
    </source>
</evidence>
<evidence type="ECO:0000255" key="3">
    <source>
        <dbReference type="PROSITE-ProRule" id="PRU00143"/>
    </source>
</evidence>
<evidence type="ECO:0000256" key="4">
    <source>
        <dbReference type="SAM" id="MobiDB-lite"/>
    </source>
</evidence>
<evidence type="ECO:0000269" key="5">
    <source>
    </source>
</evidence>
<evidence type="ECO:0000305" key="6"/>
<gene>
    <name type="primary">Frmpd1</name>
    <name type="synonym">Kiaa0967</name>
</gene>
<name>FRPD1_MOUSE</name>
<sequence length="1549" mass="169208">MEELDGSLSQTRKAHRIEQMVARWLRRSRDSSARAKVAAADGPPGNPAQALTPVRHTVTLDKDVLLQNYGFHISETLPLTVVAVTAGGSAHGKLFPGDQILQMNNELAEDLSCERAADILRETEDALSITVVRCTSGVPKSSFLTEEKRARLKSNPVKVHFAEEVLVSGHSQGNSLLCMPNVLKVYLENGQTKAFKFEANTTVKDIILTVKEKLSIRSIEYFALALEEQYSISRLHLLHEEELVQQVVEREESQDSRCLFRVSFVPKDPLDLLKEDPVAFEYLYLQSCSDVLQERFAVEMKCNSALRLAALHIQERIYACAQPQKISLKYIEKDWGIENFISPTLLRNMKGKDIKKAISFHMKRNQNLLEPRQKQLISAAQLRLNYLQILGELKTYGGKVFNATLMLQDRESYIALLVGAKYGISQIINSKLNIISTLAEFANISRVELTEESEKVSMVKVYLQDVKVLTLLLESSSAKDLACLIAGYYRLFVDPANSVFHWSGNRRPTHRVSAEEGYESRACSDSEESSEVDCVLEPLSDRCLVKLSLCRPFAREEQPPGDSPTPEATRRGPSTCGASSMTDSAESEASDSANTESRGCRTSGSSESMDALEEDDLDACSSSGTSFFHFGPPGFSKGLETNSQEENSRVETSGFLCLLDLGQNANPQCQKIDGPQGLASEACSWGPELSMGRLDPRLYEGSRTDYYNLCSSISPGSHLSDSGSESTASRQGAAPPQWCQQGWMEAQSGSMLESLGLPALPPLAFEGGSSDEEYYDAADKLTPPDTLSGPRAADPSAMRLQSQSRTRGSEESLHPGPEGGEPSRQGGVKKYAKSLRKRRSFLQTDHTSQVSFPLEASASQENTDDVCYYDREPYLTLTAPSPTVSSLQDMQGEPGLLETKALGLLASLRETKSTNPASRIMEMEPETMETKSVIDSRVSSISAIRLRIDPSNTENPVTTDGSSASIPHSPHHSNPGSSSPQAAQVRPFPIVSPDQDPGGTTPKELTAEPEDSTFPLSSDHPNPDNPGPHHVSQGDTSELGEVRSEIGSESFLINHVQEVIPQITGPLCPGDGPTSGECEVNSEETALAADEVQGQLSLDSDREVMHRNGPSLFQKGSGKDLGDSKGDRLDNVPQALDVRAPAGEINSSLCSEPPATGTGQTSSDSEGENREAQEQELLTELDLAPDFLLPSAFPPETIKAEQLDRVIGEDSVPVSTSQQVCVHTVPSLPKLSPCQEEPRSADSGHGSPAESKGDDSPIICLPPERSFLCFAPESHPEGSTSLSRVTSFSFAGINEVAPAEIGIEHCRCQFSYATCFRGLQPETEEEDGDPQTHPAAPLTSPPSAGSQVTLPWRAARAYSCTTPLSRKSHIWPEFCSRALRQLKTTPTNAPEGFVQLTESLLELQDILEASWGVGNKHPPDKCTLHFSESRSRLCMGSQKLLASCQHVIRMDQSPEEMQGAVRVTFQHLVQLAGLCFQFTDCSRCSTRHREVAGNLRDVVYTYHQFVEAAKLTCERGYHDFSVKLLARQCTALTAAVFCLTQKFRASTAL</sequence>
<protein>
    <recommendedName>
        <fullName>FERM and PDZ domain-containing protein 1</fullName>
    </recommendedName>
</protein>
<comment type="function">
    <text evidence="1">Stabilizes membrane-bound GPSM1, and thereby promotes its interaction with GNAI1.</text>
</comment>
<comment type="subunit">
    <text evidence="1 5">Interacts with GPSM1 (By similarity). Interacts with GPSM2 (PubMed:23318951).</text>
</comment>
<comment type="subcellular location">
    <subcellularLocation>
        <location evidence="1">Cytoplasm</location>
        <location evidence="1">Cytosol</location>
    </subcellularLocation>
    <subcellularLocation>
        <location evidence="1">Cell membrane</location>
        <topology evidence="1">Peripheral membrane protein</topology>
        <orientation evidence="1">Cytoplasmic side</orientation>
    </subcellularLocation>
    <text evidence="1">Found both in the cytoplasm and associated with the cell membrane.</text>
</comment>
<reference key="1">
    <citation type="journal article" date="2009" name="PLoS Biol.">
        <title>Lineage-specific biology revealed by a finished genome assembly of the mouse.</title>
        <authorList>
            <person name="Church D.M."/>
            <person name="Goodstadt L."/>
            <person name="Hillier L.W."/>
            <person name="Zody M.C."/>
            <person name="Goldstein S."/>
            <person name="She X."/>
            <person name="Bult C.J."/>
            <person name="Agarwala R."/>
            <person name="Cherry J.L."/>
            <person name="DiCuccio M."/>
            <person name="Hlavina W."/>
            <person name="Kapustin Y."/>
            <person name="Meric P."/>
            <person name="Maglott D."/>
            <person name="Birtle Z."/>
            <person name="Marques A.C."/>
            <person name="Graves T."/>
            <person name="Zhou S."/>
            <person name="Teague B."/>
            <person name="Potamousis K."/>
            <person name="Churas C."/>
            <person name="Place M."/>
            <person name="Herschleb J."/>
            <person name="Runnheim R."/>
            <person name="Forrest D."/>
            <person name="Amos-Landgraf J."/>
            <person name="Schwartz D.C."/>
            <person name="Cheng Z."/>
            <person name="Lindblad-Toh K."/>
            <person name="Eichler E.E."/>
            <person name="Ponting C.P."/>
        </authorList>
    </citation>
    <scope>NUCLEOTIDE SEQUENCE [LARGE SCALE GENOMIC DNA]</scope>
    <source>
        <strain>C57BL/6J</strain>
    </source>
</reference>
<reference key="2">
    <citation type="journal article" date="2003" name="DNA Res.">
        <title>Prediction of the coding sequences of mouse homologues of KIAA gene: II. The complete nucleotide sequences of 400 mouse KIAA-homologous cDNAs identified by screening of terminal sequences of cDNA clones randomly sampled from size-fractionated libraries.</title>
        <authorList>
            <person name="Okazaki N."/>
            <person name="Kikuno R."/>
            <person name="Ohara R."/>
            <person name="Inamoto S."/>
            <person name="Aizawa H."/>
            <person name="Yuasa S."/>
            <person name="Nakajima D."/>
            <person name="Nagase T."/>
            <person name="Ohara O."/>
            <person name="Koga H."/>
        </authorList>
    </citation>
    <scope>NUCLEOTIDE SEQUENCE [LARGE SCALE MRNA] OF 107-1549</scope>
    <source>
        <tissue>Brain</tissue>
    </source>
</reference>
<reference key="3">
    <citation type="journal article" date="2004" name="Genome Res.">
        <title>The status, quality, and expansion of the NIH full-length cDNA project: the Mammalian Gene Collection (MGC).</title>
        <authorList>
            <consortium name="The MGC Project Team"/>
        </authorList>
    </citation>
    <scope>NUCLEOTIDE SEQUENCE [LARGE SCALE MRNA] OF 363-1549</scope>
    <source>
        <tissue>Eye</tissue>
    </source>
</reference>
<reference key="4">
    <citation type="journal article" date="2013" name="J. Mol. Biol.">
        <title>Structural and biochemical characterization of the interaction between LGN and Frmpd1.</title>
        <authorList>
            <person name="Pan Z."/>
            <person name="Shang Y."/>
            <person name="Jia M."/>
            <person name="Zhang L."/>
            <person name="Xia C."/>
            <person name="Zhang M."/>
            <person name="Wang W."/>
            <person name="Wen W."/>
        </authorList>
    </citation>
    <scope>INTERACTION WITH GPSM2</scope>
</reference>
<organism>
    <name type="scientific">Mus musculus</name>
    <name type="common">Mouse</name>
    <dbReference type="NCBI Taxonomy" id="10090"/>
    <lineage>
        <taxon>Eukaryota</taxon>
        <taxon>Metazoa</taxon>
        <taxon>Chordata</taxon>
        <taxon>Craniata</taxon>
        <taxon>Vertebrata</taxon>
        <taxon>Euteleostomi</taxon>
        <taxon>Mammalia</taxon>
        <taxon>Eutheria</taxon>
        <taxon>Euarchontoglires</taxon>
        <taxon>Glires</taxon>
        <taxon>Rodentia</taxon>
        <taxon>Myomorpha</taxon>
        <taxon>Muroidea</taxon>
        <taxon>Muridae</taxon>
        <taxon>Murinae</taxon>
        <taxon>Mus</taxon>
        <taxon>Mus</taxon>
    </lineage>
</organism>